<feature type="chain" id="PRO_0000288545" description="Beta-1,3-galactosyl-O-glycosyl-glycoprotein beta-1,6-N-acetylglucosaminyltransferase 3">
    <location>
        <begin position="1"/>
        <end position="438"/>
    </location>
</feature>
<feature type="topological domain" description="Cytoplasmic" evidence="2">
    <location>
        <begin position="1"/>
        <end position="6"/>
    </location>
</feature>
<feature type="transmembrane region" description="Helical; Signal-anchor for type II membrane protein" evidence="2">
    <location>
        <begin position="7"/>
        <end position="26"/>
    </location>
</feature>
<feature type="topological domain" description="Lumenal" evidence="2">
    <location>
        <begin position="27"/>
        <end position="438"/>
    </location>
</feature>
<feature type="glycosylation site" description="N-linked (GlcNAc...) asparagine" evidence="2">
    <location>
        <position position="289"/>
    </location>
</feature>
<feature type="disulfide bond" evidence="1">
    <location>
        <begin position="70"/>
        <end position="227"/>
    </location>
</feature>
<feature type="disulfide bond" evidence="1">
    <location>
        <begin position="161"/>
        <end position="382"/>
    </location>
</feature>
<feature type="disulfide bond" evidence="1">
    <location>
        <begin position="182"/>
        <end position="209"/>
    </location>
</feature>
<feature type="disulfide bond" evidence="1">
    <location>
        <begin position="391"/>
        <end position="423"/>
    </location>
</feature>
<sequence>MVQWKRLCQLHYLWALGCYMLLATVALKLSFRLKCDSDHLGLESRESQSQYCRNILYNFLKLPAKRSINCSGVTRGDQEAVLQAILNNLEVKKKREPFTDTHYLSLTRDCEHFKAERKFIQFPLSKEEVEFPIAYSMVIHEKIENFERLLRAVYAPQNIYCVHVDEKSPETFKEAVKAIISCFPNVFIASKLVRVVYASWSRVQADLNCMEDLLQSSVPWKYFLNTCGTDFPIKSNAEMVQALKMLNGRNSMESEVPPKHKETRWKYHFEVVRDTLHLTNKKKDPPPYNLTMFTGNAYIVASRDFVQHVLKNPKSQQLIEWVKDTYSPDEHLWATLQRARWMPGSVPNHPKYDISDMTSIARLVKWQGHEGDIDKGAPYAPCSGIHQRAICVYGAGDLNWMLQNHHLLANKFDPKVDDNALQCLEEYLRYKAIYGTEL</sequence>
<name>GCNT3_HUMAN</name>
<dbReference type="EC" id="2.4.1.102" evidence="6"/>
<dbReference type="EC" id="2.4.1.148" evidence="6"/>
<dbReference type="EC" id="2.4.1.150" evidence="6"/>
<dbReference type="EMBL" id="AF102542">
    <property type="protein sequence ID" value="AAD10824.1"/>
    <property type="molecule type" value="mRNA"/>
</dbReference>
<dbReference type="EMBL" id="AF038650">
    <property type="protein sequence ID" value="AAD21525.1"/>
    <property type="molecule type" value="mRNA"/>
</dbReference>
<dbReference type="EMBL" id="EF152283">
    <property type="protein sequence ID" value="ABM21534.1"/>
    <property type="molecule type" value="mRNA"/>
</dbReference>
<dbReference type="EMBL" id="BC017032">
    <property type="protein sequence ID" value="AAH17032.1"/>
    <property type="molecule type" value="mRNA"/>
</dbReference>
<dbReference type="CCDS" id="CCDS10172.1"/>
<dbReference type="RefSeq" id="NP_004742.1">
    <property type="nucleotide sequence ID" value="NM_004751.3"/>
</dbReference>
<dbReference type="SMR" id="O95395"/>
<dbReference type="BioGRID" id="114671">
    <property type="interactions" value="26"/>
</dbReference>
<dbReference type="FunCoup" id="O95395">
    <property type="interactions" value="156"/>
</dbReference>
<dbReference type="IntAct" id="O95395">
    <property type="interactions" value="22"/>
</dbReference>
<dbReference type="STRING" id="9606.ENSP00000379377"/>
<dbReference type="CAZy" id="GT14">
    <property type="family name" value="Glycosyltransferase Family 14"/>
</dbReference>
<dbReference type="GlyCosmos" id="O95395">
    <property type="glycosylation" value="1 site, No reported glycans"/>
</dbReference>
<dbReference type="GlyGen" id="O95395">
    <property type="glycosylation" value="1 site"/>
</dbReference>
<dbReference type="iPTMnet" id="O95395"/>
<dbReference type="PhosphoSitePlus" id="O95395"/>
<dbReference type="BioMuta" id="GCNT3"/>
<dbReference type="jPOST" id="O95395"/>
<dbReference type="MassIVE" id="O95395"/>
<dbReference type="PaxDb" id="9606-ENSP00000379377"/>
<dbReference type="PeptideAtlas" id="O95395"/>
<dbReference type="ProteomicsDB" id="50846"/>
<dbReference type="Antibodypedia" id="2476">
    <property type="antibodies" value="385 antibodies from 31 providers"/>
</dbReference>
<dbReference type="DNASU" id="9245"/>
<dbReference type="Ensembl" id="ENST00000396065.3">
    <property type="protein sequence ID" value="ENSP00000379377.1"/>
    <property type="gene ID" value="ENSG00000140297.13"/>
</dbReference>
<dbReference type="Ensembl" id="ENST00000560585.5">
    <property type="protein sequence ID" value="ENSP00000452741.1"/>
    <property type="gene ID" value="ENSG00000140297.13"/>
</dbReference>
<dbReference type="GeneID" id="9245"/>
<dbReference type="KEGG" id="hsa:9245"/>
<dbReference type="MANE-Select" id="ENST00000396065.3">
    <property type="protein sequence ID" value="ENSP00000379377.1"/>
    <property type="RefSeq nucleotide sequence ID" value="NM_004751.3"/>
    <property type="RefSeq protein sequence ID" value="NP_004742.1"/>
</dbReference>
<dbReference type="UCSC" id="uc002agd.4">
    <property type="organism name" value="human"/>
</dbReference>
<dbReference type="AGR" id="HGNC:4205"/>
<dbReference type="CTD" id="9245"/>
<dbReference type="DisGeNET" id="9245"/>
<dbReference type="GeneCards" id="GCNT3"/>
<dbReference type="HGNC" id="HGNC:4205">
    <property type="gene designation" value="GCNT3"/>
</dbReference>
<dbReference type="HPA" id="ENSG00000140297">
    <property type="expression patterns" value="Tissue enhanced (gallbladder, intestine, salivary gland)"/>
</dbReference>
<dbReference type="MIM" id="606836">
    <property type="type" value="gene"/>
</dbReference>
<dbReference type="neXtProt" id="NX_O95395"/>
<dbReference type="OpenTargets" id="ENSG00000140297"/>
<dbReference type="PharmGKB" id="PA28620"/>
<dbReference type="VEuPathDB" id="HostDB:ENSG00000140297"/>
<dbReference type="eggNOG" id="KOG0799">
    <property type="taxonomic scope" value="Eukaryota"/>
</dbReference>
<dbReference type="GeneTree" id="ENSGT00940000159331"/>
<dbReference type="HOGENOM" id="CLU_032341_1_2_1"/>
<dbReference type="InParanoid" id="O95395"/>
<dbReference type="OMA" id="NMTRDCE"/>
<dbReference type="OrthoDB" id="2019572at2759"/>
<dbReference type="PAN-GO" id="O95395">
    <property type="GO annotations" value="1 GO annotation based on evolutionary models"/>
</dbReference>
<dbReference type="PhylomeDB" id="O95395"/>
<dbReference type="TreeFam" id="TF315534"/>
<dbReference type="BioCyc" id="MetaCyc:HS06698-MONOMER"/>
<dbReference type="BRENDA" id="2.4.1.102">
    <property type="organism ID" value="2681"/>
</dbReference>
<dbReference type="BRENDA" id="2.4.1.150">
    <property type="organism ID" value="2681"/>
</dbReference>
<dbReference type="PathwayCommons" id="O95395"/>
<dbReference type="Reactome" id="R-HSA-913709">
    <property type="pathway name" value="O-linked glycosylation of mucins"/>
</dbReference>
<dbReference type="SignaLink" id="O95395"/>
<dbReference type="UniPathway" id="UPA00378"/>
<dbReference type="BioGRID-ORCS" id="9245">
    <property type="hits" value="22 hits in 1141 CRISPR screens"/>
</dbReference>
<dbReference type="ChiTaRS" id="GCNT3">
    <property type="organism name" value="human"/>
</dbReference>
<dbReference type="GenomeRNAi" id="9245"/>
<dbReference type="Pharos" id="O95395">
    <property type="development level" value="Tbio"/>
</dbReference>
<dbReference type="PRO" id="PR:O95395"/>
<dbReference type="Proteomes" id="UP000005640">
    <property type="component" value="Chromosome 15"/>
</dbReference>
<dbReference type="RNAct" id="O95395">
    <property type="molecule type" value="protein"/>
</dbReference>
<dbReference type="Bgee" id="ENSG00000140297">
    <property type="expression patterns" value="Expressed in palpebral conjunctiva and 141 other cell types or tissues"/>
</dbReference>
<dbReference type="ExpressionAtlas" id="O95395">
    <property type="expression patterns" value="baseline and differential"/>
</dbReference>
<dbReference type="GO" id="GO:0070062">
    <property type="term" value="C:extracellular exosome"/>
    <property type="evidence" value="ECO:0007005"/>
    <property type="project" value="UniProtKB"/>
</dbReference>
<dbReference type="GO" id="GO:0000139">
    <property type="term" value="C:Golgi membrane"/>
    <property type="evidence" value="ECO:0000304"/>
    <property type="project" value="Reactome"/>
</dbReference>
<dbReference type="GO" id="GO:0016020">
    <property type="term" value="C:membrane"/>
    <property type="evidence" value="ECO:0000304"/>
    <property type="project" value="ProtInc"/>
</dbReference>
<dbReference type="GO" id="GO:0047225">
    <property type="term" value="F:acetylgalactosaminyl-O-glycosyl-glycoprotein beta-1,6-N-acetylglucosaminyltransferase activity"/>
    <property type="evidence" value="ECO:0007669"/>
    <property type="project" value="UniProtKB-EC"/>
</dbReference>
<dbReference type="GO" id="GO:0008375">
    <property type="term" value="F:acetylglucosaminyltransferase activity"/>
    <property type="evidence" value="ECO:0000318"/>
    <property type="project" value="GO_Central"/>
</dbReference>
<dbReference type="GO" id="GO:0003829">
    <property type="term" value="F:beta-1,3-galactosyl-O-glycosyl-glycoprotein beta-1,6-N-acetylglucosaminyltransferase activity"/>
    <property type="evidence" value="ECO:0000304"/>
    <property type="project" value="Reactome"/>
</dbReference>
<dbReference type="GO" id="GO:0008109">
    <property type="term" value="F:N-acetyllactosaminide beta-1,6-N-acetylglucosaminyltransferase activity"/>
    <property type="evidence" value="ECO:0000304"/>
    <property type="project" value="ProtInc"/>
</dbReference>
<dbReference type="GO" id="GO:0005975">
    <property type="term" value="P:carbohydrate metabolic process"/>
    <property type="evidence" value="ECO:0000303"/>
    <property type="project" value="ProtInc"/>
</dbReference>
<dbReference type="GO" id="GO:0050892">
    <property type="term" value="P:intestinal absorption"/>
    <property type="evidence" value="ECO:0007669"/>
    <property type="project" value="Ensembl"/>
</dbReference>
<dbReference type="GO" id="GO:0060993">
    <property type="term" value="P:kidney morphogenesis"/>
    <property type="evidence" value="ECO:0007669"/>
    <property type="project" value="Ensembl"/>
</dbReference>
<dbReference type="GO" id="GO:0016266">
    <property type="term" value="P:O-glycan processing"/>
    <property type="evidence" value="ECO:0000304"/>
    <property type="project" value="Reactome"/>
</dbReference>
<dbReference type="GO" id="GO:0006493">
    <property type="term" value="P:protein O-linked glycosylation"/>
    <property type="evidence" value="ECO:0000304"/>
    <property type="project" value="ProtInc"/>
</dbReference>
<dbReference type="GO" id="GO:0048729">
    <property type="term" value="P:tissue morphogenesis"/>
    <property type="evidence" value="ECO:0007669"/>
    <property type="project" value="Ensembl"/>
</dbReference>
<dbReference type="InterPro" id="IPR003406">
    <property type="entry name" value="Glyco_trans_14"/>
</dbReference>
<dbReference type="PANTHER" id="PTHR19297:SF81">
    <property type="entry name" value="BETA-1,3-GALACTOSYL-O-GLYCOSYL-GLYCOPROTEIN BETA-1,6-N-ACETYLGLUCOSAMINYLTRANSFERASE 3"/>
    <property type="match status" value="1"/>
</dbReference>
<dbReference type="PANTHER" id="PTHR19297">
    <property type="entry name" value="GLYCOSYLTRANSFERASE 14 FAMILY MEMBER"/>
    <property type="match status" value="1"/>
</dbReference>
<dbReference type="Pfam" id="PF02485">
    <property type="entry name" value="Branch"/>
    <property type="match status" value="1"/>
</dbReference>
<comment type="function">
    <text evidence="6">Glycosyltransferase that can synthesize all known mucin beta 6 N-acetylglucosaminides. Mediates core 2 and core 4 O-glycan branching, 2 important steps in mucin-type biosynthesis. Also has I-branching enzyme activity by converting linear into branched poly-N-acetyllactosaminoglycans, leading to introduce the blood group I antigen during embryonic development.</text>
</comment>
<comment type="catalytic activity">
    <reaction evidence="6">
        <text>a 3-O-[beta-D-galactosyl-(1-&gt;3)-N-acetyl-alpha-D-galactosaminyl]-L-seryl-[protein] + UDP-N-acetyl-alpha-D-glucosamine = 3-O-{beta-D-galactosyl-(1-&gt;3)-[N-acetyl-beta-D-glucosaminyl-(1-&gt;6)]-N-acetyl-alpha-D-galactosaminyl}-L-seryl-[protein] + UDP + H(+)</text>
        <dbReference type="Rhea" id="RHEA:56212"/>
        <dbReference type="Rhea" id="RHEA-COMP:13922"/>
        <dbReference type="Rhea" id="RHEA-COMP:14419"/>
        <dbReference type="ChEBI" id="CHEBI:15378"/>
        <dbReference type="ChEBI" id="CHEBI:57705"/>
        <dbReference type="ChEBI" id="CHEBI:58223"/>
        <dbReference type="ChEBI" id="CHEBI:137949"/>
        <dbReference type="ChEBI" id="CHEBI:139605"/>
        <dbReference type="EC" id="2.4.1.102"/>
    </reaction>
</comment>
<comment type="catalytic activity">
    <reaction evidence="6">
        <text>a 3-O-[beta-D-galactosyl-(1-&gt;3)-N-acetyl-alpha-D-galactosaminyl]-L-threonyl-[protein] + UDP-N-acetyl-alpha-D-glucosamine = a 3-O-{beta-D-galactosyl-(1-&gt;3)-[N-acetyl-beta-D-glucosaminyl-(1-&gt;6)]-N-acetyl-alpha-D-galactosaminyl}-L-threonyl-[protein] + UDP + H(+)</text>
        <dbReference type="Rhea" id="RHEA:56216"/>
        <dbReference type="Rhea" id="RHEA-COMP:13923"/>
        <dbReference type="Rhea" id="RHEA-COMP:14420"/>
        <dbReference type="ChEBI" id="CHEBI:15378"/>
        <dbReference type="ChEBI" id="CHEBI:57705"/>
        <dbReference type="ChEBI" id="CHEBI:58223"/>
        <dbReference type="ChEBI" id="CHEBI:137950"/>
        <dbReference type="ChEBI" id="CHEBI:139607"/>
        <dbReference type="EC" id="2.4.1.102"/>
    </reaction>
</comment>
<comment type="catalytic activity">
    <reaction evidence="6">
        <text>a beta-D-Gal-(1-&gt;4)-beta-D-GlcNAc-(1-&gt;3)-beta-D-Gal-(1-&gt;4)-beta-D-GlcNAc derivative + UDP-N-acetyl-alpha-D-glucosamine = a beta-D-Gal-(1-&gt;4)-beta-D-GlcNAc-(1-&gt;3)-[beta-D-GlcNAc-(1-&gt;6)]-beta-D-Gal-(1-&gt;4)-N-acetyl-beta-D-glucosaminyl derivative + UDP + H(+)</text>
        <dbReference type="Rhea" id="RHEA:54820"/>
        <dbReference type="ChEBI" id="CHEBI:15378"/>
        <dbReference type="ChEBI" id="CHEBI:57705"/>
        <dbReference type="ChEBI" id="CHEBI:58223"/>
        <dbReference type="ChEBI" id="CHEBI:138371"/>
        <dbReference type="ChEBI" id="CHEBI:138372"/>
        <dbReference type="EC" id="2.4.1.150"/>
    </reaction>
</comment>
<comment type="catalytic activity">
    <reaction evidence="6">
        <text>3-O-[N-acetyl-beta-D-glucosaminyl-(1-&gt;3)-N-acetyl-alpha-D-galactosaminyl]-L-seryl-[protein] + UDP-N-acetyl-alpha-D-glucosamine = 3-O-[N-acetyl-beta-D-glucosaminyl-(1-&gt;3)-[N-acetyl-beta-D-glucosaminyl-(1-&gt;6)]-N-acetyl-alpha-D-galactosaminyl]-L-seryl-[protein] + UDP + H(+)</text>
        <dbReference type="Rhea" id="RHEA:56188"/>
        <dbReference type="Rhea" id="RHEA-COMP:11691"/>
        <dbReference type="Rhea" id="RHEA-COMP:14412"/>
        <dbReference type="ChEBI" id="CHEBI:15378"/>
        <dbReference type="ChEBI" id="CHEBI:57705"/>
        <dbReference type="ChEBI" id="CHEBI:58223"/>
        <dbReference type="ChEBI" id="CHEBI:87079"/>
        <dbReference type="ChEBI" id="CHEBI:139581"/>
        <dbReference type="EC" id="2.4.1.148"/>
    </reaction>
</comment>
<comment type="catalytic activity">
    <reaction evidence="6">
        <text>a 3-O-[N-acetyl-beta-D-glucosaminyl-(1-&gt;3)-N-acetyl-alpha-D-galactosaminyl]-L-threonyl-[protein] + UDP-N-acetyl-alpha-D-glucosamine = 3-O-[N-acetyl-beta-D-glucosaminyl-(1-&gt;3)-[N-acetyl-beta-D-glucosaminyl-(1-&gt;6)]-N-acetyl-alpha-D-galactosaminyl]-L-threonyl-[protein] + UDP + H(+)</text>
        <dbReference type="Rhea" id="RHEA:56192"/>
        <dbReference type="Rhea" id="RHEA-COMP:11692"/>
        <dbReference type="Rhea" id="RHEA-COMP:14413"/>
        <dbReference type="ChEBI" id="CHEBI:15378"/>
        <dbReference type="ChEBI" id="CHEBI:57705"/>
        <dbReference type="ChEBI" id="CHEBI:58223"/>
        <dbReference type="ChEBI" id="CHEBI:87080"/>
        <dbReference type="ChEBI" id="CHEBI:139580"/>
        <dbReference type="EC" id="2.4.1.148"/>
    </reaction>
</comment>
<comment type="pathway">
    <text>Protein modification; protein glycosylation.</text>
</comment>
<comment type="subcellular location">
    <subcellularLocation>
        <location evidence="1">Golgi apparatus membrane</location>
        <topology evidence="1">Single-pass type II membrane protein</topology>
    </subcellularLocation>
</comment>
<comment type="tissue specificity">
    <text evidence="5 6">Primarily expressed in mucus-secreting tissues. Expressed in colon, kidney, small intestine, trachea, and stomach, where mucin is produced.</text>
</comment>
<comment type="induction">
    <text evidence="3 4 5">By all-trans retinoic acid (ATRA), TNF and IL13/interleukin-13. Strongly down-regulated in colorectal cancer.</text>
</comment>
<comment type="PTM">
    <text evidence="1">N-glycosylated.</text>
</comment>
<comment type="similarity">
    <text evidence="7">Belongs to the glycosyltransferase 14 family.</text>
</comment>
<comment type="online information" name="Atlas of Genetics and Cytogenetics in Oncology and Haematology">
    <link uri="https://atlasgeneticsoncology.org/gene/44105/GCNT3"/>
</comment>
<comment type="online information" name="Functional Glycomics Gateway - GTase">
    <link uri="http://www.functionalglycomics.org/glycomics/molecule/jsp/glycoEnzyme/viewGlycoEnzyme.jsp?gbpId=gt_hum_544"/>
    <text>Core 2/core 4 beta-1,6-N-acetylglucosaminyltransferase</text>
</comment>
<accession>O95395</accession>
<protein>
    <recommendedName>
        <fullName>Beta-1,3-galactosyl-O-glycosyl-glycoprotein beta-1,6-N-acetylglucosaminyltransferase 3</fullName>
        <ecNumber evidence="6">2.4.1.102</ecNumber>
        <ecNumber evidence="6">2.4.1.148</ecNumber>
        <ecNumber evidence="6">2.4.1.150</ecNumber>
    </recommendedName>
    <alternativeName>
        <fullName>C2GnT-mucin type</fullName>
        <shortName>C2GnT-M</shortName>
        <shortName>hC2GnT-M</shortName>
    </alternativeName>
    <alternativeName>
        <fullName>Core 2/core 4 beta-1,6-N-acetylglucosaminyltransferase</fullName>
        <shortName>C2/4GnT</shortName>
    </alternativeName>
</protein>
<evidence type="ECO:0000250" key="1"/>
<evidence type="ECO:0000255" key="2"/>
<evidence type="ECO:0000269" key="3">
    <source>
    </source>
</evidence>
<evidence type="ECO:0000269" key="4">
    <source>
    </source>
</evidence>
<evidence type="ECO:0000269" key="5">
    <source>
    </source>
</evidence>
<evidence type="ECO:0000269" key="6">
    <source>
    </source>
</evidence>
<evidence type="ECO:0000305" key="7"/>
<organism>
    <name type="scientific">Homo sapiens</name>
    <name type="common">Human</name>
    <dbReference type="NCBI Taxonomy" id="9606"/>
    <lineage>
        <taxon>Eukaryota</taxon>
        <taxon>Metazoa</taxon>
        <taxon>Chordata</taxon>
        <taxon>Craniata</taxon>
        <taxon>Vertebrata</taxon>
        <taxon>Euteleostomi</taxon>
        <taxon>Mammalia</taxon>
        <taxon>Eutheria</taxon>
        <taxon>Euarchontoglires</taxon>
        <taxon>Primates</taxon>
        <taxon>Haplorrhini</taxon>
        <taxon>Catarrhini</taxon>
        <taxon>Hominidae</taxon>
        <taxon>Homo</taxon>
    </lineage>
</organism>
<reference key="1">
    <citation type="journal article" date="1999" name="J. Biol. Chem.">
        <title>Molecular cloning and expression of a novel beta-1, 6-N-acetylglucosaminyltransferase that forms core 2, core 4, and I branches.</title>
        <authorList>
            <person name="Yeh J.-C."/>
            <person name="Ong E."/>
            <person name="Fukuda M."/>
        </authorList>
    </citation>
    <scope>NUCLEOTIDE SEQUENCE [MRNA]</scope>
    <scope>FUNCTION</scope>
    <scope>ENZYME ACTIVITY</scope>
    <scope>TISSUE SPECIFICITY</scope>
    <source>
        <tissue>Brain</tissue>
    </source>
</reference>
<reference key="2">
    <citation type="journal article" date="1999" name="J. Biol. Chem.">
        <title>Control of O-glycan branch formation. Molecular cloning of human cDNA encoding a novel beta1,6-N-acetylglucosaminyltransferase forming core 2 and core 4.</title>
        <authorList>
            <person name="Schwientek T."/>
            <person name="Nomoto M."/>
            <person name="Levery S.B."/>
            <person name="Merkx G."/>
            <person name="van Kessel A.G."/>
            <person name="Bennett E.P."/>
            <person name="Hollingsworth M.A."/>
            <person name="Clausen H."/>
        </authorList>
    </citation>
    <scope>NUCLEOTIDE SEQUENCE [MRNA]</scope>
</reference>
<reference key="3">
    <citation type="journal article" date="2007" name="Am. J. Respir. Cell Mol. Biol.">
        <title>Mucin biosynthesis: identification of the cis-regulatory elements of human C2GnT-M gene.</title>
        <authorList>
            <person name="Tan S."/>
            <person name="Cheng P.-W."/>
        </authorList>
    </citation>
    <scope>NUCLEOTIDE SEQUENCE [MRNA]</scope>
    <scope>TISSUE SPECIFICITY</scope>
    <scope>INDUCTION</scope>
</reference>
<reference key="4">
    <citation type="journal article" date="2004" name="Genome Res.">
        <title>The status, quality, and expansion of the NIH full-length cDNA project: the Mammalian Gene Collection (MGC).</title>
        <authorList>
            <consortium name="The MGC Project Team"/>
        </authorList>
    </citation>
    <scope>NUCLEOTIDE SEQUENCE [LARGE SCALE MRNA]</scope>
    <source>
        <tissue>Colon</tissue>
    </source>
</reference>
<reference key="5">
    <citation type="journal article" date="2005" name="Glycoconj. J.">
        <title>Regulation of sialyl-Lewis x epitope expression by TNF-alpha and EGF in an airway carcinoma cell line.</title>
        <authorList>
            <person name="Ishibashi Y."/>
            <person name="Inouye Y."/>
            <person name="Okano T."/>
            <person name="Taniguchi A."/>
        </authorList>
    </citation>
    <scope>INDUCTION</scope>
</reference>
<reference key="6">
    <citation type="journal article" date="2006" name="Oncogene">
        <title>C2GnT-M is downregulated in colorectal cancer and its re-expression causes growth inhibition of colon cancer cells.</title>
        <authorList>
            <person name="Huang M.-C."/>
            <person name="Chen H.-Y."/>
            <person name="Huang H.-C."/>
            <person name="Huang J."/>
            <person name="Liang J.-T."/>
            <person name="Shen T.-L."/>
            <person name="Lin N.-Y."/>
            <person name="Ho C.-C."/>
            <person name="Cho I.-M."/>
            <person name="Hsu S.-M."/>
        </authorList>
    </citation>
    <scope>INDUCTION</scope>
</reference>
<proteinExistence type="evidence at protein level"/>
<gene>
    <name type="primary">GCNT3</name>
</gene>
<keyword id="KW-1015">Disulfide bond</keyword>
<keyword id="KW-0325">Glycoprotein</keyword>
<keyword id="KW-0328">Glycosyltransferase</keyword>
<keyword id="KW-0333">Golgi apparatus</keyword>
<keyword id="KW-0472">Membrane</keyword>
<keyword id="KW-1267">Proteomics identification</keyword>
<keyword id="KW-1185">Reference proteome</keyword>
<keyword id="KW-0735">Signal-anchor</keyword>
<keyword id="KW-0808">Transferase</keyword>
<keyword id="KW-0812">Transmembrane</keyword>
<keyword id="KW-1133">Transmembrane helix</keyword>